<accession>Q3ZJ80</accession>
<name>IF1C_TUPAK</name>
<evidence type="ECO:0000255" key="1">
    <source>
        <dbReference type="HAMAP-Rule" id="MF_00075"/>
    </source>
</evidence>
<comment type="function">
    <text evidence="1">One of the essential components for the initiation of protein synthesis. Stabilizes the binding of IF-2 and IF-3 on the 30S subunit to which N-formylmethionyl-tRNA(fMet) subsequently binds. Helps modulate mRNA selection, yielding the 30S pre-initiation complex (PIC). Upon addition of the 50S ribosomal subunit IF-1, IF-2 and IF-3 are released leaving the mature 70S translation initiation complex.</text>
</comment>
<comment type="subunit">
    <text evidence="1">Component of the 30S ribosomal translation pre-initiation complex which assembles on the 30S ribosome in the order IF-2 and IF-3, IF-1 and N-formylmethionyl-tRNA(fMet); mRNA recruitment can occur at any time during PIC assembly.</text>
</comment>
<comment type="subcellular location">
    <subcellularLocation>
        <location evidence="1">Plastid</location>
        <location evidence="1">Chloroplast</location>
    </subcellularLocation>
</comment>
<comment type="similarity">
    <text evidence="1">Belongs to the IF-1 family.</text>
</comment>
<protein>
    <recommendedName>
        <fullName evidence="1">Translation initiation factor IF-1, chloroplastic</fullName>
    </recommendedName>
</protein>
<organism>
    <name type="scientific">Tupiella akineta</name>
    <name type="common">Green alga</name>
    <name type="synonym">Pseudendoclonium akinetum</name>
    <dbReference type="NCBI Taxonomy" id="160070"/>
    <lineage>
        <taxon>Eukaryota</taxon>
        <taxon>Viridiplantae</taxon>
        <taxon>Chlorophyta</taxon>
        <taxon>Ulvophyceae</taxon>
        <taxon>OUU clade</taxon>
        <taxon>Ulotrichales</taxon>
        <taxon>Tupiellaceae</taxon>
        <taxon>Tupiella</taxon>
    </lineage>
</organism>
<keyword id="KW-0150">Chloroplast</keyword>
<keyword id="KW-0396">Initiation factor</keyword>
<keyword id="KW-0934">Plastid</keyword>
<keyword id="KW-0648">Protein biosynthesis</keyword>
<keyword id="KW-0694">RNA-binding</keyword>
<keyword id="KW-0699">rRNA-binding</keyword>
<proteinExistence type="inferred from homology"/>
<dbReference type="EMBL" id="AY835431">
    <property type="protein sequence ID" value="AAV80611.1"/>
    <property type="molecule type" value="Genomic_DNA"/>
</dbReference>
<dbReference type="RefSeq" id="YP_636187.1">
    <property type="nucleotide sequence ID" value="NC_008114.1"/>
</dbReference>
<dbReference type="SMR" id="Q3ZJ80"/>
<dbReference type="GeneID" id="4108791"/>
<dbReference type="GO" id="GO:0009507">
    <property type="term" value="C:chloroplast"/>
    <property type="evidence" value="ECO:0007669"/>
    <property type="project" value="UniProtKB-SubCell"/>
</dbReference>
<dbReference type="GO" id="GO:0005829">
    <property type="term" value="C:cytosol"/>
    <property type="evidence" value="ECO:0007669"/>
    <property type="project" value="TreeGrafter"/>
</dbReference>
<dbReference type="GO" id="GO:0043022">
    <property type="term" value="F:ribosome binding"/>
    <property type="evidence" value="ECO:0007669"/>
    <property type="project" value="UniProtKB-UniRule"/>
</dbReference>
<dbReference type="GO" id="GO:0019843">
    <property type="term" value="F:rRNA binding"/>
    <property type="evidence" value="ECO:0007669"/>
    <property type="project" value="UniProtKB-UniRule"/>
</dbReference>
<dbReference type="GO" id="GO:0003743">
    <property type="term" value="F:translation initiation factor activity"/>
    <property type="evidence" value="ECO:0007669"/>
    <property type="project" value="UniProtKB-UniRule"/>
</dbReference>
<dbReference type="CDD" id="cd04451">
    <property type="entry name" value="S1_IF1"/>
    <property type="match status" value="1"/>
</dbReference>
<dbReference type="FunFam" id="2.40.50.140:FF:000002">
    <property type="entry name" value="Translation initiation factor IF-1"/>
    <property type="match status" value="1"/>
</dbReference>
<dbReference type="Gene3D" id="2.40.50.140">
    <property type="entry name" value="Nucleic acid-binding proteins"/>
    <property type="match status" value="1"/>
</dbReference>
<dbReference type="HAMAP" id="MF_00075">
    <property type="entry name" value="IF_1"/>
    <property type="match status" value="1"/>
</dbReference>
<dbReference type="InterPro" id="IPR012340">
    <property type="entry name" value="NA-bd_OB-fold"/>
</dbReference>
<dbReference type="InterPro" id="IPR006196">
    <property type="entry name" value="RNA-binding_domain_S1_IF1"/>
</dbReference>
<dbReference type="InterPro" id="IPR003029">
    <property type="entry name" value="S1_domain"/>
</dbReference>
<dbReference type="InterPro" id="IPR001253">
    <property type="entry name" value="TIF_eIF-1A"/>
</dbReference>
<dbReference type="InterPro" id="IPR004368">
    <property type="entry name" value="TIF_IF1"/>
</dbReference>
<dbReference type="NCBIfam" id="TIGR00008">
    <property type="entry name" value="infA"/>
    <property type="match status" value="1"/>
</dbReference>
<dbReference type="PANTHER" id="PTHR33370">
    <property type="entry name" value="TRANSLATION INITIATION FACTOR IF-1, CHLOROPLASTIC"/>
    <property type="match status" value="1"/>
</dbReference>
<dbReference type="PANTHER" id="PTHR33370:SF1">
    <property type="entry name" value="TRANSLATION INITIATION FACTOR IF-1, CHLOROPLASTIC"/>
    <property type="match status" value="1"/>
</dbReference>
<dbReference type="Pfam" id="PF01176">
    <property type="entry name" value="eIF-1a"/>
    <property type="match status" value="1"/>
</dbReference>
<dbReference type="SMART" id="SM00652">
    <property type="entry name" value="eIF1a"/>
    <property type="match status" value="1"/>
</dbReference>
<dbReference type="SMART" id="SM00316">
    <property type="entry name" value="S1"/>
    <property type="match status" value="1"/>
</dbReference>
<dbReference type="SUPFAM" id="SSF50249">
    <property type="entry name" value="Nucleic acid-binding proteins"/>
    <property type="match status" value="1"/>
</dbReference>
<dbReference type="PROSITE" id="PS50832">
    <property type="entry name" value="S1_IF1_TYPE"/>
    <property type="match status" value="1"/>
</dbReference>
<reference key="1">
    <citation type="journal article" date="2005" name="Mol. Biol. Evol.">
        <title>The chloroplast genome sequence of the green alga Pseudendoclonium akinetum (Ulvophyceae) reveals unusual structural features and new insights into the branching order of chlorophyte lineages.</title>
        <authorList>
            <person name="Pombert J.-F."/>
            <person name="Otis C."/>
            <person name="Lemieux C."/>
            <person name="Turmel M."/>
        </authorList>
    </citation>
    <scope>NUCLEOTIDE SEQUENCE [LARGE SCALE GENOMIC DNA]</scope>
    <source>
        <strain>UTEX 1912</strain>
    </source>
</reference>
<sequence>MRLAPIKLVVNYYVLFGKSLNQEKENLIEMKGVITQCLSNGMFRVKLENGFKVIAHISGKIRRNFIRILLGDSVIVELSPYDLTRGRIIYRLKPTNSSTETLRFNTNLK</sequence>
<feature type="chain" id="PRO_0000226952" description="Translation initiation factor IF-1, chloroplastic">
    <location>
        <begin position="1"/>
        <end position="109"/>
    </location>
</feature>
<feature type="domain" description="S1-like" evidence="1">
    <location>
        <begin position="18"/>
        <end position="93"/>
    </location>
</feature>
<geneLocation type="chloroplast"/>
<gene>
    <name evidence="1" type="primary">infA</name>
</gene>